<accession>C1C8I7</accession>
<organism>
    <name type="scientific">Streptococcus pneumoniae (strain 70585)</name>
    <dbReference type="NCBI Taxonomy" id="488221"/>
    <lineage>
        <taxon>Bacteria</taxon>
        <taxon>Bacillati</taxon>
        <taxon>Bacillota</taxon>
        <taxon>Bacilli</taxon>
        <taxon>Lactobacillales</taxon>
        <taxon>Streptococcaceae</taxon>
        <taxon>Streptococcus</taxon>
    </lineage>
</organism>
<dbReference type="EC" id="5.4.99.12" evidence="1"/>
<dbReference type="EMBL" id="CP000918">
    <property type="protein sequence ID" value="ACO17279.1"/>
    <property type="molecule type" value="Genomic_DNA"/>
</dbReference>
<dbReference type="RefSeq" id="WP_000199188.1">
    <property type="nucleotide sequence ID" value="NC_012468.1"/>
</dbReference>
<dbReference type="SMR" id="C1C8I7"/>
<dbReference type="KEGG" id="snm:SP70585_1638"/>
<dbReference type="HOGENOM" id="CLU_014673_0_1_9"/>
<dbReference type="Proteomes" id="UP000002211">
    <property type="component" value="Chromosome"/>
</dbReference>
<dbReference type="GO" id="GO:0003723">
    <property type="term" value="F:RNA binding"/>
    <property type="evidence" value="ECO:0007669"/>
    <property type="project" value="InterPro"/>
</dbReference>
<dbReference type="GO" id="GO:0160147">
    <property type="term" value="F:tRNA pseudouridine(38-40) synthase activity"/>
    <property type="evidence" value="ECO:0007669"/>
    <property type="project" value="UniProtKB-EC"/>
</dbReference>
<dbReference type="GO" id="GO:0031119">
    <property type="term" value="P:tRNA pseudouridine synthesis"/>
    <property type="evidence" value="ECO:0007669"/>
    <property type="project" value="UniProtKB-UniRule"/>
</dbReference>
<dbReference type="CDD" id="cd02570">
    <property type="entry name" value="PseudoU_synth_EcTruA"/>
    <property type="match status" value="1"/>
</dbReference>
<dbReference type="FunFam" id="3.30.70.580:FF:000001">
    <property type="entry name" value="tRNA pseudouridine synthase A"/>
    <property type="match status" value="1"/>
</dbReference>
<dbReference type="FunFam" id="3.30.70.660:FF:000009">
    <property type="entry name" value="tRNA pseudouridine synthase A"/>
    <property type="match status" value="1"/>
</dbReference>
<dbReference type="Gene3D" id="3.30.70.660">
    <property type="entry name" value="Pseudouridine synthase I, catalytic domain, C-terminal subdomain"/>
    <property type="match status" value="1"/>
</dbReference>
<dbReference type="Gene3D" id="3.30.70.580">
    <property type="entry name" value="Pseudouridine synthase I, catalytic domain, N-terminal subdomain"/>
    <property type="match status" value="1"/>
</dbReference>
<dbReference type="HAMAP" id="MF_00171">
    <property type="entry name" value="TruA"/>
    <property type="match status" value="1"/>
</dbReference>
<dbReference type="InterPro" id="IPR020103">
    <property type="entry name" value="PsdUridine_synth_cat_dom_sf"/>
</dbReference>
<dbReference type="InterPro" id="IPR001406">
    <property type="entry name" value="PsdUridine_synth_TruA"/>
</dbReference>
<dbReference type="InterPro" id="IPR020097">
    <property type="entry name" value="PsdUridine_synth_TruA_a/b_dom"/>
</dbReference>
<dbReference type="InterPro" id="IPR020095">
    <property type="entry name" value="PsdUridine_synth_TruA_C"/>
</dbReference>
<dbReference type="InterPro" id="IPR020094">
    <property type="entry name" value="TruA/RsuA/RluB/E/F_N"/>
</dbReference>
<dbReference type="NCBIfam" id="TIGR00071">
    <property type="entry name" value="hisT_truA"/>
    <property type="match status" value="1"/>
</dbReference>
<dbReference type="PANTHER" id="PTHR11142">
    <property type="entry name" value="PSEUDOURIDYLATE SYNTHASE"/>
    <property type="match status" value="1"/>
</dbReference>
<dbReference type="PANTHER" id="PTHR11142:SF0">
    <property type="entry name" value="TRNA PSEUDOURIDINE SYNTHASE-LIKE 1"/>
    <property type="match status" value="1"/>
</dbReference>
<dbReference type="Pfam" id="PF01416">
    <property type="entry name" value="PseudoU_synth_1"/>
    <property type="match status" value="2"/>
</dbReference>
<dbReference type="PIRSF" id="PIRSF001430">
    <property type="entry name" value="tRNA_psdUrid_synth"/>
    <property type="match status" value="1"/>
</dbReference>
<dbReference type="SUPFAM" id="SSF55120">
    <property type="entry name" value="Pseudouridine synthase"/>
    <property type="match status" value="1"/>
</dbReference>
<sequence>MTRYKATISYDGYAFAGFQRQPHARSVQEEIEKTLTRLNKGQAITVHGAGRTDSGVHALGQVIHFDLPYQMDEEKLRFALDTQSPEDIDVISIELVADDFHCRYAKHSKTYEFTVDRGRPKNPMRRHYATHFPYPLDVERMQIAIKKLEGTHDFTGFTASGTSVEDKVRTITEASLIVDETGQFLTFTFSGNGFLYKQIRNMVGTLLKIGNNRMPVEQIDLILEKKDRQLAGPTAAPNGLYLKEIRYEE</sequence>
<proteinExistence type="inferred from homology"/>
<feature type="chain" id="PRO_1000194571" description="tRNA pseudouridine synthase A">
    <location>
        <begin position="1"/>
        <end position="249"/>
    </location>
</feature>
<feature type="active site" description="Nucleophile" evidence="1">
    <location>
        <position position="53"/>
    </location>
</feature>
<feature type="binding site" evidence="1">
    <location>
        <position position="111"/>
    </location>
    <ligand>
        <name>substrate</name>
    </ligand>
</feature>
<name>TRUA_STRP7</name>
<gene>
    <name evidence="1" type="primary">truA</name>
    <name type="ordered locus">SP70585_1638</name>
</gene>
<keyword id="KW-0413">Isomerase</keyword>
<keyword id="KW-0819">tRNA processing</keyword>
<evidence type="ECO:0000255" key="1">
    <source>
        <dbReference type="HAMAP-Rule" id="MF_00171"/>
    </source>
</evidence>
<comment type="function">
    <text evidence="1">Formation of pseudouridine at positions 38, 39 and 40 in the anticodon stem and loop of transfer RNAs.</text>
</comment>
<comment type="catalytic activity">
    <reaction evidence="1">
        <text>uridine(38/39/40) in tRNA = pseudouridine(38/39/40) in tRNA</text>
        <dbReference type="Rhea" id="RHEA:22376"/>
        <dbReference type="Rhea" id="RHEA-COMP:10085"/>
        <dbReference type="Rhea" id="RHEA-COMP:10087"/>
        <dbReference type="ChEBI" id="CHEBI:65314"/>
        <dbReference type="ChEBI" id="CHEBI:65315"/>
        <dbReference type="EC" id="5.4.99.12"/>
    </reaction>
</comment>
<comment type="subunit">
    <text evidence="1">Homodimer.</text>
</comment>
<comment type="similarity">
    <text evidence="1">Belongs to the tRNA pseudouridine synthase TruA family.</text>
</comment>
<protein>
    <recommendedName>
        <fullName evidence="1">tRNA pseudouridine synthase A</fullName>
        <ecNumber evidence="1">5.4.99.12</ecNumber>
    </recommendedName>
    <alternativeName>
        <fullName evidence="1">tRNA pseudouridine(38-40) synthase</fullName>
    </alternativeName>
    <alternativeName>
        <fullName evidence="1">tRNA pseudouridylate synthase I</fullName>
    </alternativeName>
    <alternativeName>
        <fullName evidence="1">tRNA-uridine isomerase I</fullName>
    </alternativeName>
</protein>
<reference key="1">
    <citation type="journal article" date="2010" name="Genome Biol.">
        <title>Structure and dynamics of the pan-genome of Streptococcus pneumoniae and closely related species.</title>
        <authorList>
            <person name="Donati C."/>
            <person name="Hiller N.L."/>
            <person name="Tettelin H."/>
            <person name="Muzzi A."/>
            <person name="Croucher N.J."/>
            <person name="Angiuoli S.V."/>
            <person name="Oggioni M."/>
            <person name="Dunning Hotopp J.C."/>
            <person name="Hu F.Z."/>
            <person name="Riley D.R."/>
            <person name="Covacci A."/>
            <person name="Mitchell T.J."/>
            <person name="Bentley S.D."/>
            <person name="Kilian M."/>
            <person name="Ehrlich G.D."/>
            <person name="Rappuoli R."/>
            <person name="Moxon E.R."/>
            <person name="Masignani V."/>
        </authorList>
    </citation>
    <scope>NUCLEOTIDE SEQUENCE [LARGE SCALE GENOMIC DNA]</scope>
    <source>
        <strain>70585</strain>
    </source>
</reference>